<evidence type="ECO:0000250" key="1"/>
<evidence type="ECO:0000255" key="2">
    <source>
        <dbReference type="HAMAP-Rule" id="MF_00768"/>
    </source>
</evidence>
<comment type="function">
    <text evidence="1">Repressor involved in the biosynthesis of the osmoprotectant glycine betaine. It represses transcription of the choline transporter BetT and the genes of BetAB involved in the synthesis of glycine betaine (By similarity).</text>
</comment>
<comment type="pathway">
    <text>Amine and polyamine biosynthesis; betaine biosynthesis via choline pathway [regulation].</text>
</comment>
<keyword id="KW-0238">DNA-binding</keyword>
<keyword id="KW-0678">Repressor</keyword>
<keyword id="KW-0804">Transcription</keyword>
<keyword id="KW-0805">Transcription regulation</keyword>
<gene>
    <name evidence="2" type="primary">betI</name>
    <name type="ordered locus">BURPS1106A_A1835</name>
</gene>
<dbReference type="EMBL" id="CP000573">
    <property type="protein sequence ID" value="ABN93719.1"/>
    <property type="molecule type" value="Genomic_DNA"/>
</dbReference>
<dbReference type="RefSeq" id="WP_004202513.1">
    <property type="nucleotide sequence ID" value="NC_009078.1"/>
</dbReference>
<dbReference type="SMR" id="A3P6A9"/>
<dbReference type="GeneID" id="93063521"/>
<dbReference type="KEGG" id="bpl:BURPS1106A_A1835"/>
<dbReference type="HOGENOM" id="CLU_069356_15_4_4"/>
<dbReference type="UniPathway" id="UPA00529"/>
<dbReference type="Proteomes" id="UP000006738">
    <property type="component" value="Chromosome II"/>
</dbReference>
<dbReference type="GO" id="GO:0003700">
    <property type="term" value="F:DNA-binding transcription factor activity"/>
    <property type="evidence" value="ECO:0007669"/>
    <property type="project" value="UniProtKB-UniRule"/>
</dbReference>
<dbReference type="GO" id="GO:0000976">
    <property type="term" value="F:transcription cis-regulatory region binding"/>
    <property type="evidence" value="ECO:0007669"/>
    <property type="project" value="TreeGrafter"/>
</dbReference>
<dbReference type="GO" id="GO:0019285">
    <property type="term" value="P:glycine betaine biosynthetic process from choline"/>
    <property type="evidence" value="ECO:0007669"/>
    <property type="project" value="UniProtKB-UniRule"/>
</dbReference>
<dbReference type="GO" id="GO:0045892">
    <property type="term" value="P:negative regulation of DNA-templated transcription"/>
    <property type="evidence" value="ECO:0007669"/>
    <property type="project" value="UniProtKB-UniRule"/>
</dbReference>
<dbReference type="Gene3D" id="1.10.357.10">
    <property type="entry name" value="Tetracycline Repressor, domain 2"/>
    <property type="match status" value="1"/>
</dbReference>
<dbReference type="HAMAP" id="MF_00768">
    <property type="entry name" value="HTH_type_BetI"/>
    <property type="match status" value="1"/>
</dbReference>
<dbReference type="InterPro" id="IPR039538">
    <property type="entry name" value="BetI_C"/>
</dbReference>
<dbReference type="InterPro" id="IPR023772">
    <property type="entry name" value="DNA-bd_HTH_TetR-type_CS"/>
</dbReference>
<dbReference type="InterPro" id="IPR009057">
    <property type="entry name" value="Homeodomain-like_sf"/>
</dbReference>
<dbReference type="InterPro" id="IPR050109">
    <property type="entry name" value="HTH-type_TetR-like_transc_reg"/>
</dbReference>
<dbReference type="InterPro" id="IPR001647">
    <property type="entry name" value="HTH_TetR"/>
</dbReference>
<dbReference type="InterPro" id="IPR036271">
    <property type="entry name" value="Tet_transcr_reg_TetR-rel_C_sf"/>
</dbReference>
<dbReference type="InterPro" id="IPR017757">
    <property type="entry name" value="Tscrpt_rep_BetI"/>
</dbReference>
<dbReference type="NCBIfam" id="TIGR03384">
    <property type="entry name" value="betaine_BetI"/>
    <property type="match status" value="1"/>
</dbReference>
<dbReference type="NCBIfam" id="NF001978">
    <property type="entry name" value="PRK00767.1"/>
    <property type="match status" value="1"/>
</dbReference>
<dbReference type="PANTHER" id="PTHR30055:SF234">
    <property type="entry name" value="HTH-TYPE TRANSCRIPTIONAL REGULATOR BETI"/>
    <property type="match status" value="1"/>
</dbReference>
<dbReference type="PANTHER" id="PTHR30055">
    <property type="entry name" value="HTH-TYPE TRANSCRIPTIONAL REGULATOR RUTR"/>
    <property type="match status" value="1"/>
</dbReference>
<dbReference type="Pfam" id="PF13977">
    <property type="entry name" value="TetR_C_6"/>
    <property type="match status" value="1"/>
</dbReference>
<dbReference type="Pfam" id="PF00440">
    <property type="entry name" value="TetR_N"/>
    <property type="match status" value="1"/>
</dbReference>
<dbReference type="SUPFAM" id="SSF46689">
    <property type="entry name" value="Homeodomain-like"/>
    <property type="match status" value="1"/>
</dbReference>
<dbReference type="SUPFAM" id="SSF48498">
    <property type="entry name" value="Tetracyclin repressor-like, C-terminal domain"/>
    <property type="match status" value="1"/>
</dbReference>
<dbReference type="PROSITE" id="PS01081">
    <property type="entry name" value="HTH_TETR_1"/>
    <property type="match status" value="1"/>
</dbReference>
<dbReference type="PROSITE" id="PS50977">
    <property type="entry name" value="HTH_TETR_2"/>
    <property type="match status" value="1"/>
</dbReference>
<name>BETI_BURP0</name>
<reference key="1">
    <citation type="journal article" date="2010" name="Genome Biol. Evol.">
        <title>Continuing evolution of Burkholderia mallei through genome reduction and large-scale rearrangements.</title>
        <authorList>
            <person name="Losada L."/>
            <person name="Ronning C.M."/>
            <person name="DeShazer D."/>
            <person name="Woods D."/>
            <person name="Fedorova N."/>
            <person name="Kim H.S."/>
            <person name="Shabalina S.A."/>
            <person name="Pearson T.R."/>
            <person name="Brinkac L."/>
            <person name="Tan P."/>
            <person name="Nandi T."/>
            <person name="Crabtree J."/>
            <person name="Badger J."/>
            <person name="Beckstrom-Sternberg S."/>
            <person name="Saqib M."/>
            <person name="Schutzer S.E."/>
            <person name="Keim P."/>
            <person name="Nierman W.C."/>
        </authorList>
    </citation>
    <scope>NUCLEOTIDE SEQUENCE [LARGE SCALE GENOMIC DNA]</scope>
    <source>
        <strain>1106a</strain>
    </source>
</reference>
<sequence>MPKLGMREIRRAQLIDATLRSIDEAGLPGTTLASVAQRANISTGIVSHYFGDKDGLLEATMRHVLRDLWAATTRRRAAASDAPRARLRAVVAANFDDTQISAPVMKTWLAFWSQSMHEPTLRRLQRVNTRRLHSNLCAEFAKTLPRARAREAASGLAALIDGLWLRGALAGEPLDTKAALKLANDYIDQLLAPRV</sequence>
<protein>
    <recommendedName>
        <fullName evidence="2">HTH-type transcriptional regulator BetI</fullName>
    </recommendedName>
</protein>
<organism>
    <name type="scientific">Burkholderia pseudomallei (strain 1106a)</name>
    <dbReference type="NCBI Taxonomy" id="357348"/>
    <lineage>
        <taxon>Bacteria</taxon>
        <taxon>Pseudomonadati</taxon>
        <taxon>Pseudomonadota</taxon>
        <taxon>Betaproteobacteria</taxon>
        <taxon>Burkholderiales</taxon>
        <taxon>Burkholderiaceae</taxon>
        <taxon>Burkholderia</taxon>
        <taxon>pseudomallei group</taxon>
    </lineage>
</organism>
<feature type="chain" id="PRO_1000083557" description="HTH-type transcriptional regulator BetI">
    <location>
        <begin position="1"/>
        <end position="195"/>
    </location>
</feature>
<feature type="domain" description="HTH tetR-type" evidence="2">
    <location>
        <begin position="8"/>
        <end position="68"/>
    </location>
</feature>
<feature type="DNA-binding region" description="H-T-H motif" evidence="2">
    <location>
        <begin position="31"/>
        <end position="50"/>
    </location>
</feature>
<accession>A3P6A9</accession>
<proteinExistence type="inferred from homology"/>